<gene>
    <name evidence="1" type="primary">rpl20</name>
</gene>
<keyword id="KW-0150">Chloroplast</keyword>
<keyword id="KW-0934">Plastid</keyword>
<keyword id="KW-0687">Ribonucleoprotein</keyword>
<keyword id="KW-0689">Ribosomal protein</keyword>
<keyword id="KW-0694">RNA-binding</keyword>
<keyword id="KW-0699">rRNA-binding</keyword>
<accession>Q14FD4</accession>
<reference key="1">
    <citation type="submission" date="2005-03" db="EMBL/GenBank/DDBJ databases">
        <title>Complete structure of the chloroplast genome of Populus alba.</title>
        <authorList>
            <person name="Okumura S."/>
            <person name="Yamashita A."/>
            <person name="Kanamoto H."/>
            <person name="Hattori M."/>
            <person name="Takase H."/>
            <person name="Tomizawa K."/>
        </authorList>
    </citation>
    <scope>NUCLEOTIDE SEQUENCE [LARGE SCALE GENOMIC DNA]</scope>
</reference>
<geneLocation type="chloroplast"/>
<feature type="chain" id="PRO_0000276423" description="Large ribosomal subunit protein bL20c">
    <location>
        <begin position="1"/>
        <end position="117"/>
    </location>
</feature>
<name>RK20_POPAL</name>
<proteinExistence type="inferred from homology"/>
<dbReference type="EMBL" id="AP008956">
    <property type="protein sequence ID" value="BAE97228.1"/>
    <property type="molecule type" value="Genomic_DNA"/>
</dbReference>
<dbReference type="RefSeq" id="YP_665581.1">
    <property type="nucleotide sequence ID" value="NC_008235.1"/>
</dbReference>
<dbReference type="SMR" id="Q14FD4"/>
<dbReference type="GeneID" id="4178247"/>
<dbReference type="KEGG" id="palz:4178247"/>
<dbReference type="OrthoDB" id="38388at3646"/>
<dbReference type="GO" id="GO:0009507">
    <property type="term" value="C:chloroplast"/>
    <property type="evidence" value="ECO:0007669"/>
    <property type="project" value="UniProtKB-SubCell"/>
</dbReference>
<dbReference type="GO" id="GO:1990904">
    <property type="term" value="C:ribonucleoprotein complex"/>
    <property type="evidence" value="ECO:0007669"/>
    <property type="project" value="UniProtKB-KW"/>
</dbReference>
<dbReference type="GO" id="GO:0005840">
    <property type="term" value="C:ribosome"/>
    <property type="evidence" value="ECO:0007669"/>
    <property type="project" value="UniProtKB-KW"/>
</dbReference>
<dbReference type="GO" id="GO:0019843">
    <property type="term" value="F:rRNA binding"/>
    <property type="evidence" value="ECO:0007669"/>
    <property type="project" value="UniProtKB-UniRule"/>
</dbReference>
<dbReference type="GO" id="GO:0003735">
    <property type="term" value="F:structural constituent of ribosome"/>
    <property type="evidence" value="ECO:0007669"/>
    <property type="project" value="InterPro"/>
</dbReference>
<dbReference type="GO" id="GO:0000027">
    <property type="term" value="P:ribosomal large subunit assembly"/>
    <property type="evidence" value="ECO:0007669"/>
    <property type="project" value="UniProtKB-UniRule"/>
</dbReference>
<dbReference type="GO" id="GO:0006412">
    <property type="term" value="P:translation"/>
    <property type="evidence" value="ECO:0007669"/>
    <property type="project" value="InterPro"/>
</dbReference>
<dbReference type="CDD" id="cd07026">
    <property type="entry name" value="Ribosomal_L20"/>
    <property type="match status" value="1"/>
</dbReference>
<dbReference type="FunFam" id="1.10.1900.20:FF:000001">
    <property type="entry name" value="50S ribosomal protein L20"/>
    <property type="match status" value="1"/>
</dbReference>
<dbReference type="Gene3D" id="6.10.160.10">
    <property type="match status" value="1"/>
</dbReference>
<dbReference type="Gene3D" id="1.10.1900.20">
    <property type="entry name" value="Ribosomal protein L20"/>
    <property type="match status" value="1"/>
</dbReference>
<dbReference type="HAMAP" id="MF_00382">
    <property type="entry name" value="Ribosomal_bL20"/>
    <property type="match status" value="1"/>
</dbReference>
<dbReference type="InterPro" id="IPR005813">
    <property type="entry name" value="Ribosomal_bL20"/>
</dbReference>
<dbReference type="InterPro" id="IPR049946">
    <property type="entry name" value="RIBOSOMAL_L20_CS"/>
</dbReference>
<dbReference type="InterPro" id="IPR035566">
    <property type="entry name" value="Ribosomal_protein_bL20_C"/>
</dbReference>
<dbReference type="NCBIfam" id="TIGR01032">
    <property type="entry name" value="rplT_bact"/>
    <property type="match status" value="1"/>
</dbReference>
<dbReference type="PANTHER" id="PTHR10986">
    <property type="entry name" value="39S RIBOSOMAL PROTEIN L20"/>
    <property type="match status" value="1"/>
</dbReference>
<dbReference type="Pfam" id="PF00453">
    <property type="entry name" value="Ribosomal_L20"/>
    <property type="match status" value="1"/>
</dbReference>
<dbReference type="PRINTS" id="PR00062">
    <property type="entry name" value="RIBOSOMALL20"/>
</dbReference>
<dbReference type="SUPFAM" id="SSF74731">
    <property type="entry name" value="Ribosomal protein L20"/>
    <property type="match status" value="1"/>
</dbReference>
<dbReference type="PROSITE" id="PS00937">
    <property type="entry name" value="RIBOSOMAL_L20"/>
    <property type="match status" value="1"/>
</dbReference>
<protein>
    <recommendedName>
        <fullName evidence="1">Large ribosomal subunit protein bL20c</fullName>
    </recommendedName>
    <alternativeName>
        <fullName evidence="2">50S ribosomal protein L20, chloroplastic</fullName>
    </alternativeName>
</protein>
<comment type="function">
    <text evidence="1">Binds directly to 23S ribosomal RNA and is necessary for the in vitro assembly process of the 50S ribosomal subunit. It is not involved in the protein synthesizing functions of that subunit.</text>
</comment>
<comment type="subcellular location">
    <subcellularLocation>
        <location>Plastid</location>
        <location>Chloroplast</location>
    </subcellularLocation>
</comment>
<comment type="similarity">
    <text evidence="1">Belongs to the bacterial ribosomal protein bL20 family.</text>
</comment>
<evidence type="ECO:0000255" key="1">
    <source>
        <dbReference type="HAMAP-Rule" id="MF_00382"/>
    </source>
</evidence>
<evidence type="ECO:0000305" key="2"/>
<sequence length="117" mass="14146">MTRIRRGYIARRRRTKIRLFTSSFRGAHSRLTRTIIQQRIKALFSAYRDRDRHKRNFRCLWVTRINAAIRENAVSYSYSTLINNLYKRQLLLNRKILAQLAILNRNCLYLISNDMIK</sequence>
<organism>
    <name type="scientific">Populus alba</name>
    <name type="common">White poplar</name>
    <dbReference type="NCBI Taxonomy" id="43335"/>
    <lineage>
        <taxon>Eukaryota</taxon>
        <taxon>Viridiplantae</taxon>
        <taxon>Streptophyta</taxon>
        <taxon>Embryophyta</taxon>
        <taxon>Tracheophyta</taxon>
        <taxon>Spermatophyta</taxon>
        <taxon>Magnoliopsida</taxon>
        <taxon>eudicotyledons</taxon>
        <taxon>Gunneridae</taxon>
        <taxon>Pentapetalae</taxon>
        <taxon>rosids</taxon>
        <taxon>fabids</taxon>
        <taxon>Malpighiales</taxon>
        <taxon>Salicaceae</taxon>
        <taxon>Saliceae</taxon>
        <taxon>Populus</taxon>
    </lineage>
</organism>